<reference key="1">
    <citation type="submission" date="2005-08" db="EMBL/GenBank/DDBJ databases">
        <title>Complete sequence of chromosome 1 of Synechococcus elongatus PCC 7942.</title>
        <authorList>
            <consortium name="US DOE Joint Genome Institute"/>
            <person name="Copeland A."/>
            <person name="Lucas S."/>
            <person name="Lapidus A."/>
            <person name="Barry K."/>
            <person name="Detter J.C."/>
            <person name="Glavina T."/>
            <person name="Hammon N."/>
            <person name="Israni S."/>
            <person name="Pitluck S."/>
            <person name="Schmutz J."/>
            <person name="Larimer F."/>
            <person name="Land M."/>
            <person name="Kyrpides N."/>
            <person name="Lykidis A."/>
            <person name="Golden S."/>
            <person name="Richardson P."/>
        </authorList>
    </citation>
    <scope>NUCLEOTIDE SEQUENCE [LARGE SCALE GENOMIC DNA]</scope>
    <source>
        <strain>ATCC 33912 / PCC 7942 / FACHB-805</strain>
    </source>
</reference>
<reference key="2">
    <citation type="journal article" date="2015" name="Nat. Struct. Mol. Biol.">
        <title>Structure and mechanism of the Rubisco-assembly chaperone Raf1.</title>
        <authorList>
            <person name="Hauser T."/>
            <person name="Bhat J.Y."/>
            <person name="Milicic G."/>
            <person name="Wendler P."/>
            <person name="Hartl F.U."/>
            <person name="Bracher A."/>
            <person name="Hayer-Hartl M."/>
        </authorList>
    </citation>
    <scope>FUNCTION</scope>
    <scope>INTERACTION WITH RBCL</scope>
    <scope>SUBUNIT</scope>
    <scope>DOMAIN</scope>
    <scope>MUTAGENESIS OF 60-ASN--GLN-67; SER-71; 94-TYR-GLU-95; 97-ARG-GLU-98; ARG-104; 126-LYS--LYS-129; LYS-126; LYS-129; ARG-155; GLU-159; ARG-208; 338-ARG--ARG-341 AND ARG-338</scope>
    <source>
        <strain>ATCC 33912 / PCC 7942 / FACHB-805</strain>
    </source>
</reference>
<reference evidence="7" key="3">
    <citation type="journal article" date="2020" name="Proc. Natl. Acad. Sci. U.S.A.">
        <title>Rubisco accumulation factor 1 (Raf1) plays essential roles in mediating Rubisco assembly and carboxysome biogenesis.</title>
        <authorList>
            <person name="Huang F."/>
            <person name="Kong W.W."/>
            <person name="Sun Y."/>
            <person name="Chen T."/>
            <person name="Dykes G.F."/>
            <person name="Jiang Y.L."/>
            <person name="Liu L.N."/>
        </authorList>
    </citation>
    <scope>STRUCTURE BY ELECTRON MICROSCOPY (4.30 ANGSTROMS) OF 13-200 IN COMPLEX WITH RUBISCO LARGE SUBUNIT (RBCL)</scope>
    <scope>FUNCTION</scope>
    <scope>CARBOXYSOME ASSEMBLY PROCESS</scope>
    <scope>DOMAIN</scope>
    <scope>DISRUPTION PHENOTYPE</scope>
    <source>
        <strain>ATCC 33912 / PCC 7942 / FACHB-805</strain>
    </source>
</reference>
<dbReference type="EMBL" id="CP000100">
    <property type="protein sequence ID" value="ABB56864.1"/>
    <property type="molecule type" value="Genomic_DNA"/>
</dbReference>
<dbReference type="RefSeq" id="WP_011377752.1">
    <property type="nucleotide sequence ID" value="NZ_JACJTX010000005.1"/>
</dbReference>
<dbReference type="PDB" id="6SMH">
    <property type="method" value="EM"/>
    <property type="resolution" value="4.30 A"/>
    <property type="chains" value="I/J/K/L/M/N/O/P=13-200"/>
</dbReference>
<dbReference type="PDBsum" id="6SMH"/>
<dbReference type="EMDB" id="EMD-10235"/>
<dbReference type="SMR" id="Q31Q05"/>
<dbReference type="STRING" id="1140.Synpcc7942_0833"/>
<dbReference type="PaxDb" id="1140-Synpcc7942_0833"/>
<dbReference type="KEGG" id="syf:Synpcc7942_0833"/>
<dbReference type="eggNOG" id="ENOG502Z7IG">
    <property type="taxonomic scope" value="Bacteria"/>
</dbReference>
<dbReference type="HOGENOM" id="CLU_766477_0_0_3"/>
<dbReference type="OrthoDB" id="420612at2"/>
<dbReference type="BioCyc" id="SYNEL:SYNPCC7942_0833-MONOMER"/>
<dbReference type="SABIO-RK" id="Q31Q05"/>
<dbReference type="CD-CODE" id="42CE018A">
    <property type="entry name" value="McdB condensate"/>
</dbReference>
<dbReference type="CD-CODE" id="D5B33633">
    <property type="entry name" value="Carboxysome"/>
</dbReference>
<dbReference type="Proteomes" id="UP000889800">
    <property type="component" value="Chromosome"/>
</dbReference>
<dbReference type="GO" id="GO:0005737">
    <property type="term" value="C:cytoplasm"/>
    <property type="evidence" value="ECO:0007669"/>
    <property type="project" value="UniProtKB-SubCell"/>
</dbReference>
<dbReference type="GO" id="GO:0015977">
    <property type="term" value="P:carbon fixation"/>
    <property type="evidence" value="ECO:0007669"/>
    <property type="project" value="UniProtKB-UniRule"/>
</dbReference>
<dbReference type="GO" id="GO:0015979">
    <property type="term" value="P:photosynthesis"/>
    <property type="evidence" value="ECO:0007669"/>
    <property type="project" value="UniProtKB-KW"/>
</dbReference>
<dbReference type="GO" id="GO:0110102">
    <property type="term" value="P:ribulose bisphosphate carboxylase complex assembly"/>
    <property type="evidence" value="ECO:0000314"/>
    <property type="project" value="UniProtKB"/>
</dbReference>
<dbReference type="HAMAP" id="MF_00856">
    <property type="entry name" value="Raf1"/>
    <property type="match status" value="1"/>
</dbReference>
<dbReference type="InterPro" id="IPR037494">
    <property type="entry name" value="RAF1"/>
</dbReference>
<dbReference type="InterPro" id="IPR040858">
    <property type="entry name" value="Raf1_C"/>
</dbReference>
<dbReference type="InterPro" id="IPR046382">
    <property type="entry name" value="Raf1_cyn"/>
</dbReference>
<dbReference type="InterPro" id="IPR040781">
    <property type="entry name" value="Raf1_HTH"/>
</dbReference>
<dbReference type="InterPro" id="IPR041358">
    <property type="entry name" value="Raf1_N"/>
</dbReference>
<dbReference type="PANTHER" id="PTHR35299">
    <property type="entry name" value="RUBISCO ACCUMULATION FACTOR 1"/>
    <property type="match status" value="1"/>
</dbReference>
<dbReference type="PANTHER" id="PTHR35299:SF6">
    <property type="entry name" value="RUBISCO ACCUMULATION FACTOR 1"/>
    <property type="match status" value="1"/>
</dbReference>
<dbReference type="Pfam" id="PF18579">
    <property type="entry name" value="Raf1_HTH"/>
    <property type="match status" value="1"/>
</dbReference>
<dbReference type="Pfam" id="PF18578">
    <property type="entry name" value="Raf1_N"/>
    <property type="match status" value="1"/>
</dbReference>
<dbReference type="Pfam" id="PF18087">
    <property type="entry name" value="RuBisCo_chap_C"/>
    <property type="match status" value="1"/>
</dbReference>
<organism>
    <name type="scientific">Synechococcus elongatus (strain ATCC 33912 / PCC 7942 / FACHB-805)</name>
    <name type="common">Anacystis nidulans R2</name>
    <dbReference type="NCBI Taxonomy" id="1140"/>
    <lineage>
        <taxon>Bacteria</taxon>
        <taxon>Bacillati</taxon>
        <taxon>Cyanobacteriota</taxon>
        <taxon>Cyanophyceae</taxon>
        <taxon>Synechococcales</taxon>
        <taxon>Synechococcaceae</taxon>
        <taxon>Synechococcus</taxon>
    </lineage>
</organism>
<gene>
    <name evidence="1 4" type="primary">raf1</name>
    <name type="ordered locus">Synpcc7942_0833</name>
</gene>
<name>RAF1_SYNE7</name>
<accession>Q31Q05</accession>
<proteinExistence type="evidence at protein level"/>
<evidence type="ECO:0000255" key="1">
    <source>
        <dbReference type="HAMAP-Rule" id="MF_00856"/>
    </source>
</evidence>
<evidence type="ECO:0000269" key="2">
    <source>
    </source>
</evidence>
<evidence type="ECO:0000269" key="3">
    <source>
    </source>
</evidence>
<evidence type="ECO:0000303" key="4">
    <source>
    </source>
</evidence>
<evidence type="ECO:0000305" key="5">
    <source>
    </source>
</evidence>
<evidence type="ECO:0000305" key="6">
    <source>
    </source>
</evidence>
<evidence type="ECO:0007744" key="7">
    <source>
        <dbReference type="PDB" id="6SMH"/>
    </source>
</evidence>
<protein>
    <recommendedName>
        <fullName evidence="1 4">RuBisCO accumulation factor 1</fullName>
    </recommendedName>
</protein>
<keyword id="KW-0002">3D-structure</keyword>
<keyword id="KW-0120">Carbon dioxide fixation</keyword>
<keyword id="KW-0143">Chaperone</keyword>
<keyword id="KW-0963">Cytoplasm</keyword>
<keyword id="KW-0602">Photosynthesis</keyword>
<keyword id="KW-1185">Reference proteome</keyword>
<comment type="function">
    <text evidence="1">A major RuBisCO chaperone. Acts after GroEL-GroES chaperonin to fold and/or assemble the large subunit of RuBisCO (ccbL, rbcL). Cooperates with RbcX in RbcL folding, plays the major role in assembly of dimers into RbcL(8)-Raf1(8) intermediate complexes. RbcS replaces Raf1, leading to holoenzyme formation.</text>
</comment>
<comment type="function">
    <text evidence="2 3">The Raf1 dimer brackets an RbcL dimer, leading to RbcL(8)-Raf1(8) complex formation. RbcS displaces Raf1, resulting in holoenzyme formation (PubMed:26237510, PubMed:32636267). Probably plays a role in early carboxysome assembly; in its absence CcaA, CcmM, CcmN, RbcL and RbcS colocalize in small patches while the shell proteins CcmK2, CcmK3 and CcmK4 are found diffused in the cytoplasm (PubMed:32636267).</text>
</comment>
<comment type="function">
    <text evidence="3 5">It has been suggested that Raf1 and RbcX are partially functionally redundant (Probable). Other evidence suggests they are antagonistic in mediating RuBisCO assembly (PubMed:32636267).</text>
</comment>
<comment type="subunit">
    <text evidence="1 2">Homodimer. Forms an RbcL(8)-Raf1(8) complex. Forms complexes of many stoichiometries with RbcL with and without RbcS. RbcX and Raf1 can bind simultaneously to RbcL.</text>
</comment>
<comment type="subcellular location">
    <subcellularLocation>
        <location evidence="1">Cytoplasm</location>
    </subcellularLocation>
</comment>
<comment type="domain">
    <text evidence="1 3 6">Has 3 domains, the N-terminal alpha-helical domain, an extended flexible linker and the C-terminal beta-sheet domain. The 2 C-terminal beta-sheet domains are swapped and pack against each other to form the dimer interface (By similarity). The N-terminal alpha-helical domain stabilizes RbcL dimers and dimer-dimer interactions, facilitating RbcL(8) formation. It binds to the same region of RbcL as RbcS (PubMed:32636267). The C-terminal beta-sheet domain dimerizes Raf1 (Probable) (PubMed:32636267).</text>
</comment>
<comment type="disruption phenotype">
    <text evidence="3">Decreased growth in ambient air, wild-type growth on 3% CO(2). In ambient air about 30% decreased levels of RuBisCO, decreased CO(2) fixation by whole cells. Carboxysome formation is impaired; many small, irregular electron-dense structures are present instead of the 3-4 large carboxysomes usually found in this strain, the ratio of CcmM58:CcmM35 (involved in condensing RuBisCO) rises over 3-fold. A double raf1-rbcX deletion partially recovers carboxysome formation.</text>
</comment>
<comment type="similarity">
    <text evidence="1">Belongs to the RAF family.</text>
</comment>
<feature type="chain" id="PRO_0000451577" description="RuBisCO accumulation factor 1">
    <location>
        <begin position="1"/>
        <end position="356"/>
    </location>
</feature>
<feature type="region of interest" description="N-terminal alpha-helix" evidence="1 5">
    <location>
        <begin position="9"/>
        <end position="192"/>
    </location>
</feature>
<feature type="region of interest" description="C-terminal beta-sheet" evidence="1 5">
    <location>
        <begin position="216"/>
        <end position="342"/>
    </location>
</feature>
<feature type="mutagenesis site" description="Increases RbcL(8)-Raf1 complex formation." evidence="2">
    <original>NQITVAMQ</original>
    <variation>AQITAAMA</variation>
    <location>
        <begin position="60"/>
        <end position="67"/>
    </location>
</feature>
<feature type="mutagenesis site" description="Increases RbcL(8)-Raf1 complex formation." evidence="2">
    <original>S</original>
    <variation>A</variation>
    <location>
        <position position="71"/>
    </location>
</feature>
<feature type="mutagenesis site" description="Increases RbcL(8)-Raf1 complex formation." evidence="2">
    <original>YE</original>
    <variation>AA</variation>
    <location>
        <begin position="94"/>
        <end position="95"/>
    </location>
</feature>
<feature type="mutagenesis site" description="Increases RbcL(8)-Raf1 complex formation." evidence="2">
    <original>RE</original>
    <variation>AA</variation>
    <location>
        <begin position="97"/>
        <end position="98"/>
    </location>
</feature>
<feature type="mutagenesis site" description="Increases RbcL(8)-Raf1 complex formation, decreases RuBisCO holoenzyme formation." evidence="2">
    <original>R</original>
    <variation>Q</variation>
    <location>
        <position position="104"/>
    </location>
</feature>
<feature type="mutagenesis site" description="Increases RbcL(8)-Raf1 complex formation." evidence="2">
    <original>KATK</original>
    <variation>AATA</variation>
    <location>
        <begin position="126"/>
        <end position="129"/>
    </location>
</feature>
<feature type="mutagenesis site" description="Increases RbcL(8)-Raf1 complex formation." evidence="2">
    <original>K</original>
    <variation>A</variation>
    <location>
        <position position="126"/>
    </location>
</feature>
<feature type="mutagenesis site" description="Increases RbcL(8)-Raf1 complex formation, decreases RuBisCO holoenzyme formation." evidence="2">
    <original>K</original>
    <variation>A</variation>
    <location>
        <position position="129"/>
    </location>
</feature>
<feature type="mutagenesis site" description="Increases RbcL(8)-Raf1 complex formation." evidence="2">
    <original>R</original>
    <variation>A</variation>
    <location>
        <position position="155"/>
    </location>
</feature>
<feature type="mutagenesis site" description="Wild type." evidence="2">
    <original>E</original>
    <variation>A</variation>
    <location>
        <position position="159"/>
    </location>
</feature>
<feature type="mutagenesis site" description="Incomplete conversion of RbcL(2)-Raf1 to holoenzyme." evidence="2">
    <original>R</original>
    <variation>A</variation>
    <location>
        <position position="208"/>
    </location>
</feature>
<feature type="mutagenesis site" description="Incomplete conversion of RbcL(2)-Raf1 to holoenzyme." evidence="2">
    <original>RPKR</original>
    <variation>APKA</variation>
    <location>
        <begin position="338"/>
        <end position="341"/>
    </location>
</feature>
<feature type="mutagenesis site" description="Incomplete conversion of RbcL(2)-Raf1 to holoenzyme." evidence="2">
    <original>R</original>
    <variation>A</variation>
    <location>
        <position position="338"/>
    </location>
</feature>
<sequence length="356" mass="40160">MREFTPTTLSEEERQELLGQLRRKEGRWLAWARACQTLLKNGLNPQTLFEATGFEPIQQNQITVAMQVYDSILRQDPPAHVRETYQEWGSDLLYELRELDQEQRSLCAQLALERKLDADQIREVAKATKDFCRLPKQPENFDRHPGDAVAHQCWRLAQERTDLTERSRLIARGLQFAQSAGARALIEALLLDLSGVPSRKPPMLPIYRLETEEDLPRLLPFAGTLPLSSSQIEAIAAVEAEGPFGLVSSPQGQQWLALPGWQAILTAEDPIACLEQIDRLPNAPEGPTEAVVLVVDRADRDWDADHFFLVEQAEGARIQWSPSAIAAPILGRLVLILRPKRVLDEAAIATPWQFEE</sequence>